<keyword id="KW-0326">Glycosidase</keyword>
<keyword id="KW-0378">Hydrolase</keyword>
<keyword id="KW-0520">NAD</keyword>
<keyword id="KW-0732">Signal</keyword>
<feature type="signal peptide" description="Tat-type signal" evidence="2">
    <location>
        <begin position="1"/>
        <end position="31"/>
    </location>
</feature>
<feature type="chain" id="PRO_5000129726" description="Glycosyl hydrolase family 109 protein 1">
    <location>
        <begin position="32"/>
        <end position="459"/>
    </location>
</feature>
<feature type="binding site" evidence="1">
    <location>
        <begin position="64"/>
        <end position="65"/>
    </location>
    <ligand>
        <name>NAD(+)</name>
        <dbReference type="ChEBI" id="CHEBI:57540"/>
    </ligand>
</feature>
<feature type="binding site" evidence="1">
    <location>
        <position position="86"/>
    </location>
    <ligand>
        <name>NAD(+)</name>
        <dbReference type="ChEBI" id="CHEBI:57540"/>
    </ligand>
</feature>
<feature type="binding site" evidence="1">
    <location>
        <begin position="135"/>
        <end position="138"/>
    </location>
    <ligand>
        <name>NAD(+)</name>
        <dbReference type="ChEBI" id="CHEBI:57540"/>
    </ligand>
</feature>
<feature type="binding site" evidence="1">
    <location>
        <begin position="155"/>
        <end position="156"/>
    </location>
    <ligand>
        <name>NAD(+)</name>
        <dbReference type="ChEBI" id="CHEBI:57540"/>
    </ligand>
</feature>
<feature type="binding site" evidence="1">
    <location>
        <position position="184"/>
    </location>
    <ligand>
        <name>NAD(+)</name>
        <dbReference type="ChEBI" id="CHEBI:57540"/>
    </ligand>
</feature>
<feature type="binding site" evidence="1">
    <location>
        <position position="213"/>
    </location>
    <ligand>
        <name>substrate</name>
    </ligand>
</feature>
<feature type="binding site" evidence="1">
    <location>
        <position position="232"/>
    </location>
    <ligand>
        <name>substrate</name>
    </ligand>
</feature>
<feature type="binding site" evidence="1">
    <location>
        <begin position="244"/>
        <end position="247"/>
    </location>
    <ligand>
        <name>substrate</name>
    </ligand>
</feature>
<feature type="binding site" evidence="1">
    <location>
        <position position="244"/>
    </location>
    <ligand>
        <name>NAD(+)</name>
        <dbReference type="ChEBI" id="CHEBI:57540"/>
    </ligand>
</feature>
<feature type="binding site" evidence="1">
    <location>
        <position position="326"/>
    </location>
    <ligand>
        <name>substrate</name>
    </ligand>
</feature>
<dbReference type="EC" id="3.2.1.-"/>
<dbReference type="EMBL" id="CP000446">
    <property type="protein sequence ID" value="ABI38453.1"/>
    <property type="molecule type" value="Genomic_DNA"/>
</dbReference>
<dbReference type="RefSeq" id="WP_011622158.1">
    <property type="nucleotide sequence ID" value="NC_008321.1"/>
</dbReference>
<dbReference type="SMR" id="Q0HKG4"/>
<dbReference type="CAZy" id="GH109">
    <property type="family name" value="Glycoside Hydrolase Family 109"/>
</dbReference>
<dbReference type="KEGG" id="she:Shewmr4_1375"/>
<dbReference type="HOGENOM" id="CLU_046965_0_0_6"/>
<dbReference type="GO" id="GO:0016798">
    <property type="term" value="F:hydrolase activity, acting on glycosyl bonds"/>
    <property type="evidence" value="ECO:0007669"/>
    <property type="project" value="UniProtKB-KW"/>
</dbReference>
<dbReference type="GO" id="GO:0000166">
    <property type="term" value="F:nucleotide binding"/>
    <property type="evidence" value="ECO:0007669"/>
    <property type="project" value="InterPro"/>
</dbReference>
<dbReference type="Gene3D" id="3.30.360.10">
    <property type="entry name" value="Dihydrodipicolinate Reductase, domain 2"/>
    <property type="match status" value="1"/>
</dbReference>
<dbReference type="Gene3D" id="3.40.50.720">
    <property type="entry name" value="NAD(P)-binding Rossmann-like Domain"/>
    <property type="match status" value="1"/>
</dbReference>
<dbReference type="InterPro" id="IPR000683">
    <property type="entry name" value="Gfo/Idh/MocA-like_OxRdtase_N"/>
</dbReference>
<dbReference type="InterPro" id="IPR050463">
    <property type="entry name" value="Gfo/Idh/MocA_oxidrdct_glycsds"/>
</dbReference>
<dbReference type="InterPro" id="IPR049303">
    <property type="entry name" value="Glyco_hydro_109_C"/>
</dbReference>
<dbReference type="InterPro" id="IPR036291">
    <property type="entry name" value="NAD(P)-bd_dom_sf"/>
</dbReference>
<dbReference type="InterPro" id="IPR006311">
    <property type="entry name" value="TAT_signal"/>
</dbReference>
<dbReference type="InterPro" id="IPR019546">
    <property type="entry name" value="TAT_signal_bac_arc"/>
</dbReference>
<dbReference type="NCBIfam" id="TIGR01409">
    <property type="entry name" value="TAT_signal_seq"/>
    <property type="match status" value="1"/>
</dbReference>
<dbReference type="PANTHER" id="PTHR43818">
    <property type="entry name" value="BCDNA.GH03377"/>
    <property type="match status" value="1"/>
</dbReference>
<dbReference type="PANTHER" id="PTHR43818:SF1">
    <property type="entry name" value="GLYCOSYL HYDROLASE FAMILY 109 PROTEIN"/>
    <property type="match status" value="1"/>
</dbReference>
<dbReference type="Pfam" id="PF01408">
    <property type="entry name" value="GFO_IDH_MocA"/>
    <property type="match status" value="1"/>
</dbReference>
<dbReference type="Pfam" id="PF21252">
    <property type="entry name" value="Glyco_hydro_109_C"/>
    <property type="match status" value="1"/>
</dbReference>
<dbReference type="Pfam" id="PF10518">
    <property type="entry name" value="TAT_signal"/>
    <property type="match status" value="1"/>
</dbReference>
<dbReference type="SUPFAM" id="SSF51735">
    <property type="entry name" value="NAD(P)-binding Rossmann-fold domains"/>
    <property type="match status" value="1"/>
</dbReference>
<dbReference type="PROSITE" id="PS51318">
    <property type="entry name" value="TAT"/>
    <property type="match status" value="1"/>
</dbReference>
<sequence length="459" mass="52042">MHNIHRRHFLKAAGAVTAGLVTANIALNANASSVAPKPRVGKSVIGLIAPKMELVRVGFIGVGERGFSHVEQFCHLEGVELKAICDTHQAVIDRAVEHIVNQNRPKPAVYTGNDLSYRELLNRDDIDIVIISTPWEWHAPMAIDTMESGKHAFVEVPLALTVEECWQLVDTAERTQKNCMMMENVNYGREELMVLNMVRQGVFGELLHGEAAYIHELRWQMKEIDHKTGSWRTYWHTKRNGNLYPTHGLGPISQYMNINRGDRFDYLTSMSSPALGRTLYAKREFPADHERNQLKYINGDMSTSLIKTVKGRTIMVQHDTTTPRPYSRHNLIQGTNGVFAGFPNRIAVEHGGFGKSYHEWDMDMQKWYDKYDHPLWQRIGKEAEINGGHGGMDFVMLWRMVYCLRNGEALDQDVYDGAAWSVVNILSEQSLNNRSNSVNFPDFTRGAWKHATPLGIVGA</sequence>
<gene>
    <name type="ordered locus">Shewmr4_1375</name>
</gene>
<evidence type="ECO:0000250" key="1"/>
<evidence type="ECO:0000255" key="2">
    <source>
        <dbReference type="PROSITE-ProRule" id="PRU00648"/>
    </source>
</evidence>
<evidence type="ECO:0000305" key="3"/>
<accession>Q0HKG4</accession>
<organism>
    <name type="scientific">Shewanella sp. (strain MR-4)</name>
    <dbReference type="NCBI Taxonomy" id="60480"/>
    <lineage>
        <taxon>Bacteria</taxon>
        <taxon>Pseudomonadati</taxon>
        <taxon>Pseudomonadota</taxon>
        <taxon>Gammaproteobacteria</taxon>
        <taxon>Alteromonadales</taxon>
        <taxon>Shewanellaceae</taxon>
        <taxon>Shewanella</taxon>
    </lineage>
</organism>
<comment type="function">
    <text evidence="1">Glycosidase.</text>
</comment>
<comment type="cofactor">
    <cofactor evidence="1">
        <name>NAD(+)</name>
        <dbReference type="ChEBI" id="CHEBI:57540"/>
    </cofactor>
    <text evidence="1">Binds 1 NAD(+) per subunit. The NAD(+) cannot dissociate.</text>
</comment>
<comment type="PTM">
    <text>Predicted to be exported by the Tat system. The position of the signal peptide cleavage has not been experimentally proven.</text>
</comment>
<comment type="similarity">
    <text evidence="3">Belongs to the Gfo/Idh/MocA family. Glycosyl hydrolase 109 subfamily.</text>
</comment>
<proteinExistence type="inferred from homology"/>
<reference key="1">
    <citation type="submission" date="2006-08" db="EMBL/GenBank/DDBJ databases">
        <title>Complete sequence of Shewanella sp. MR-4.</title>
        <authorList>
            <consortium name="US DOE Joint Genome Institute"/>
            <person name="Copeland A."/>
            <person name="Lucas S."/>
            <person name="Lapidus A."/>
            <person name="Barry K."/>
            <person name="Detter J.C."/>
            <person name="Glavina del Rio T."/>
            <person name="Hammon N."/>
            <person name="Israni S."/>
            <person name="Dalin E."/>
            <person name="Tice H."/>
            <person name="Pitluck S."/>
            <person name="Kiss H."/>
            <person name="Brettin T."/>
            <person name="Bruce D."/>
            <person name="Han C."/>
            <person name="Tapia R."/>
            <person name="Gilna P."/>
            <person name="Schmutz J."/>
            <person name="Larimer F."/>
            <person name="Land M."/>
            <person name="Hauser L."/>
            <person name="Kyrpides N."/>
            <person name="Mikhailova N."/>
            <person name="Nealson K."/>
            <person name="Konstantinidis K."/>
            <person name="Klappenbach J."/>
            <person name="Tiedje J."/>
            <person name="Richardson P."/>
        </authorList>
    </citation>
    <scope>NUCLEOTIDE SEQUENCE [LARGE SCALE GENOMIC DNA]</scope>
    <source>
        <strain>MR-4</strain>
    </source>
</reference>
<protein>
    <recommendedName>
        <fullName>Glycosyl hydrolase family 109 protein 1</fullName>
        <ecNumber>3.2.1.-</ecNumber>
    </recommendedName>
</protein>
<name>G1091_SHESM</name>